<accession>Q8GWH5</accession>
<accession>Q0WPV4</accession>
<accession>Q8LEX0</accession>
<dbReference type="EMBL" id="AC005679">
    <property type="status" value="NOT_ANNOTATED_CDS"/>
    <property type="molecule type" value="Genomic_DNA"/>
</dbReference>
<dbReference type="EMBL" id="CP002684">
    <property type="protein sequence ID" value="AEE36170.1"/>
    <property type="molecule type" value="Genomic_DNA"/>
</dbReference>
<dbReference type="EMBL" id="AK118839">
    <property type="protein sequence ID" value="BAC43428.1"/>
    <property type="molecule type" value="mRNA"/>
</dbReference>
<dbReference type="EMBL" id="BT005457">
    <property type="protein sequence ID" value="AAO63877.1"/>
    <property type="molecule type" value="mRNA"/>
</dbReference>
<dbReference type="EMBL" id="AK228956">
    <property type="protein sequence ID" value="BAF00845.1"/>
    <property type="molecule type" value="mRNA"/>
</dbReference>
<dbReference type="EMBL" id="AY085180">
    <property type="protein sequence ID" value="AAM61731.1"/>
    <property type="status" value="ALT_INIT"/>
    <property type="molecule type" value="mRNA"/>
</dbReference>
<dbReference type="RefSeq" id="NP_565194.1">
    <property type="nucleotide sequence ID" value="NM_106538.3"/>
</dbReference>
<dbReference type="FunCoup" id="Q8GWH5">
    <property type="interactions" value="283"/>
</dbReference>
<dbReference type="STRING" id="3702.Q8GWH5"/>
<dbReference type="PaxDb" id="3702-AT1G78895.1"/>
<dbReference type="ProteomicsDB" id="228072"/>
<dbReference type="EnsemblPlants" id="AT1G78895.1">
    <property type="protein sequence ID" value="AT1G78895.1"/>
    <property type="gene ID" value="AT1G78895"/>
</dbReference>
<dbReference type="GeneID" id="844227"/>
<dbReference type="Gramene" id="AT1G78895.1">
    <property type="protein sequence ID" value="AT1G78895.1"/>
    <property type="gene ID" value="AT1G78895"/>
</dbReference>
<dbReference type="KEGG" id="ath:AT1G78895"/>
<dbReference type="Araport" id="AT1G78895"/>
<dbReference type="TAIR" id="AT1G78895"/>
<dbReference type="eggNOG" id="KOG4197">
    <property type="taxonomic scope" value="Eukaryota"/>
</dbReference>
<dbReference type="HOGENOM" id="CLU_128436_0_0_1"/>
<dbReference type="InParanoid" id="Q8GWH5"/>
<dbReference type="OMA" id="MLCQTSQ"/>
<dbReference type="OrthoDB" id="2020646at2759"/>
<dbReference type="PhylomeDB" id="Q8GWH5"/>
<dbReference type="PRO" id="PR:Q8GWH5"/>
<dbReference type="Proteomes" id="UP000006548">
    <property type="component" value="Chromosome 1"/>
</dbReference>
<dbReference type="ExpressionAtlas" id="Q8GWH5">
    <property type="expression patterns" value="baseline and differential"/>
</dbReference>
<dbReference type="GO" id="GO:0005789">
    <property type="term" value="C:endoplasmic reticulum membrane"/>
    <property type="evidence" value="ECO:0007669"/>
    <property type="project" value="UniProtKB-SubCell"/>
</dbReference>
<dbReference type="InterPro" id="IPR003388">
    <property type="entry name" value="Reticulon"/>
</dbReference>
<dbReference type="InterPro" id="IPR044177">
    <property type="entry name" value="RTNLB22/23"/>
</dbReference>
<dbReference type="PANTHER" id="PTHR47879">
    <property type="entry name" value="RETICULON-LIKE PROTEIN B22"/>
    <property type="match status" value="1"/>
</dbReference>
<dbReference type="PANTHER" id="PTHR47879:SF2">
    <property type="entry name" value="RETICULON-LIKE PROTEIN B22"/>
    <property type="match status" value="1"/>
</dbReference>
<dbReference type="Pfam" id="PF02453">
    <property type="entry name" value="Reticulon"/>
    <property type="match status" value="1"/>
</dbReference>
<feature type="chain" id="PRO_0000371301" description="Reticulon-like protein B22">
    <location>
        <begin position="1"/>
        <end position="164"/>
    </location>
</feature>
<feature type="transmembrane region" description="Helical" evidence="2">
    <location>
        <begin position="30"/>
        <end position="50"/>
    </location>
</feature>
<feature type="transmembrane region" description="Helical" evidence="2">
    <location>
        <begin position="117"/>
        <end position="137"/>
    </location>
</feature>
<feature type="domain" description="Reticulon">
    <location>
        <begin position="1"/>
        <end position="164"/>
    </location>
</feature>
<feature type="sequence conflict" description="In Ref. 5; BAF00845." evidence="3" ref="5">
    <original>D</original>
    <variation>G</variation>
    <location>
        <position position="60"/>
    </location>
</feature>
<sequence>MGEMGKAMGLLISGTLVYYHCAYRNATLLSLFSDVFIVLLCSLAILGLLFRQLNVSVPVDPLEWQISQDTASNIVARLANTVGAAEGVLRVAATGHDKRLFVKVVICLYFLSALGRLISGVTVAYAGLCLFCLSMLCQTSQSLGNCVLKRGNGQILEQEAHSDT</sequence>
<keyword id="KW-0256">Endoplasmic reticulum</keyword>
<keyword id="KW-0472">Membrane</keyword>
<keyword id="KW-1185">Reference proteome</keyword>
<keyword id="KW-0812">Transmembrane</keyword>
<keyword id="KW-1133">Transmembrane helix</keyword>
<name>RTNLT_ARATH</name>
<organism>
    <name type="scientific">Arabidopsis thaliana</name>
    <name type="common">Mouse-ear cress</name>
    <dbReference type="NCBI Taxonomy" id="3702"/>
    <lineage>
        <taxon>Eukaryota</taxon>
        <taxon>Viridiplantae</taxon>
        <taxon>Streptophyta</taxon>
        <taxon>Embryophyta</taxon>
        <taxon>Tracheophyta</taxon>
        <taxon>Spermatophyta</taxon>
        <taxon>Magnoliopsida</taxon>
        <taxon>eudicotyledons</taxon>
        <taxon>Gunneridae</taxon>
        <taxon>Pentapetalae</taxon>
        <taxon>rosids</taxon>
        <taxon>malvids</taxon>
        <taxon>Brassicales</taxon>
        <taxon>Brassicaceae</taxon>
        <taxon>Camelineae</taxon>
        <taxon>Arabidopsis</taxon>
    </lineage>
</organism>
<evidence type="ECO:0000250" key="1"/>
<evidence type="ECO:0000255" key="2"/>
<evidence type="ECO:0000305" key="3"/>
<gene>
    <name type="primary">RTNLB22</name>
    <name type="ordered locus">At1g78895</name>
    <name type="ORF">F9K20.31</name>
</gene>
<proteinExistence type="evidence at transcript level"/>
<comment type="subcellular location">
    <subcellularLocation>
        <location evidence="1">Endoplasmic reticulum membrane</location>
        <topology evidence="1">Multi-pass membrane protein</topology>
    </subcellularLocation>
</comment>
<comment type="sequence caution" evidence="3">
    <conflict type="erroneous initiation">
        <sequence resource="EMBL-CDS" id="AAM61731"/>
    </conflict>
</comment>
<reference key="1">
    <citation type="journal article" date="2000" name="Nature">
        <title>Sequence and analysis of chromosome 1 of the plant Arabidopsis thaliana.</title>
        <authorList>
            <person name="Theologis A."/>
            <person name="Ecker J.R."/>
            <person name="Palm C.J."/>
            <person name="Federspiel N.A."/>
            <person name="Kaul S."/>
            <person name="White O."/>
            <person name="Alonso J."/>
            <person name="Altafi H."/>
            <person name="Araujo R."/>
            <person name="Bowman C.L."/>
            <person name="Brooks S.Y."/>
            <person name="Buehler E."/>
            <person name="Chan A."/>
            <person name="Chao Q."/>
            <person name="Chen H."/>
            <person name="Cheuk R.F."/>
            <person name="Chin C.W."/>
            <person name="Chung M.K."/>
            <person name="Conn L."/>
            <person name="Conway A.B."/>
            <person name="Conway A.R."/>
            <person name="Creasy T.H."/>
            <person name="Dewar K."/>
            <person name="Dunn P."/>
            <person name="Etgu P."/>
            <person name="Feldblyum T.V."/>
            <person name="Feng J.-D."/>
            <person name="Fong B."/>
            <person name="Fujii C.Y."/>
            <person name="Gill J.E."/>
            <person name="Goldsmith A.D."/>
            <person name="Haas B."/>
            <person name="Hansen N.F."/>
            <person name="Hughes B."/>
            <person name="Huizar L."/>
            <person name="Hunter J.L."/>
            <person name="Jenkins J."/>
            <person name="Johnson-Hopson C."/>
            <person name="Khan S."/>
            <person name="Khaykin E."/>
            <person name="Kim C.J."/>
            <person name="Koo H.L."/>
            <person name="Kremenetskaia I."/>
            <person name="Kurtz D.B."/>
            <person name="Kwan A."/>
            <person name="Lam B."/>
            <person name="Langin-Hooper S."/>
            <person name="Lee A."/>
            <person name="Lee J.M."/>
            <person name="Lenz C.A."/>
            <person name="Li J.H."/>
            <person name="Li Y.-P."/>
            <person name="Lin X."/>
            <person name="Liu S.X."/>
            <person name="Liu Z.A."/>
            <person name="Luros J.S."/>
            <person name="Maiti R."/>
            <person name="Marziali A."/>
            <person name="Militscher J."/>
            <person name="Miranda M."/>
            <person name="Nguyen M."/>
            <person name="Nierman W.C."/>
            <person name="Osborne B.I."/>
            <person name="Pai G."/>
            <person name="Peterson J."/>
            <person name="Pham P.K."/>
            <person name="Rizzo M."/>
            <person name="Rooney T."/>
            <person name="Rowley D."/>
            <person name="Sakano H."/>
            <person name="Salzberg S.L."/>
            <person name="Schwartz J.R."/>
            <person name="Shinn P."/>
            <person name="Southwick A.M."/>
            <person name="Sun H."/>
            <person name="Tallon L.J."/>
            <person name="Tambunga G."/>
            <person name="Toriumi M.J."/>
            <person name="Town C.D."/>
            <person name="Utterback T."/>
            <person name="Van Aken S."/>
            <person name="Vaysberg M."/>
            <person name="Vysotskaia V.S."/>
            <person name="Walker M."/>
            <person name="Wu D."/>
            <person name="Yu G."/>
            <person name="Fraser C.M."/>
            <person name="Venter J.C."/>
            <person name="Davis R.W."/>
        </authorList>
    </citation>
    <scope>NUCLEOTIDE SEQUENCE [LARGE SCALE GENOMIC DNA]</scope>
    <source>
        <strain>cv. Columbia</strain>
    </source>
</reference>
<reference key="2">
    <citation type="journal article" date="2017" name="Plant J.">
        <title>Araport11: a complete reannotation of the Arabidopsis thaliana reference genome.</title>
        <authorList>
            <person name="Cheng C.Y."/>
            <person name="Krishnakumar V."/>
            <person name="Chan A.P."/>
            <person name="Thibaud-Nissen F."/>
            <person name="Schobel S."/>
            <person name="Town C.D."/>
        </authorList>
    </citation>
    <scope>GENOME REANNOTATION</scope>
    <source>
        <strain>cv. Columbia</strain>
    </source>
</reference>
<reference key="3">
    <citation type="journal article" date="2002" name="Science">
        <title>Functional annotation of a full-length Arabidopsis cDNA collection.</title>
        <authorList>
            <person name="Seki M."/>
            <person name="Narusaka M."/>
            <person name="Kamiya A."/>
            <person name="Ishida J."/>
            <person name="Satou M."/>
            <person name="Sakurai T."/>
            <person name="Nakajima M."/>
            <person name="Enju A."/>
            <person name="Akiyama K."/>
            <person name="Oono Y."/>
            <person name="Muramatsu M."/>
            <person name="Hayashizaki Y."/>
            <person name="Kawai J."/>
            <person name="Carninci P."/>
            <person name="Itoh M."/>
            <person name="Ishii Y."/>
            <person name="Arakawa T."/>
            <person name="Shibata K."/>
            <person name="Shinagawa A."/>
            <person name="Shinozaki K."/>
        </authorList>
    </citation>
    <scope>NUCLEOTIDE SEQUENCE [LARGE SCALE MRNA]</scope>
    <source>
        <strain>cv. Columbia</strain>
    </source>
</reference>
<reference key="4">
    <citation type="journal article" date="2003" name="Science">
        <title>Empirical analysis of transcriptional activity in the Arabidopsis genome.</title>
        <authorList>
            <person name="Yamada K."/>
            <person name="Lim J."/>
            <person name="Dale J.M."/>
            <person name="Chen H."/>
            <person name="Shinn P."/>
            <person name="Palm C.J."/>
            <person name="Southwick A.M."/>
            <person name="Wu H.C."/>
            <person name="Kim C.J."/>
            <person name="Nguyen M."/>
            <person name="Pham P.K."/>
            <person name="Cheuk R.F."/>
            <person name="Karlin-Newmann G."/>
            <person name="Liu S.X."/>
            <person name="Lam B."/>
            <person name="Sakano H."/>
            <person name="Wu T."/>
            <person name="Yu G."/>
            <person name="Miranda M."/>
            <person name="Quach H.L."/>
            <person name="Tripp M."/>
            <person name="Chang C.H."/>
            <person name="Lee J.M."/>
            <person name="Toriumi M.J."/>
            <person name="Chan M.M."/>
            <person name="Tang C.C."/>
            <person name="Onodera C.S."/>
            <person name="Deng J.M."/>
            <person name="Akiyama K."/>
            <person name="Ansari Y."/>
            <person name="Arakawa T."/>
            <person name="Banh J."/>
            <person name="Banno F."/>
            <person name="Bowser L."/>
            <person name="Brooks S.Y."/>
            <person name="Carninci P."/>
            <person name="Chao Q."/>
            <person name="Choy N."/>
            <person name="Enju A."/>
            <person name="Goldsmith A.D."/>
            <person name="Gurjal M."/>
            <person name="Hansen N.F."/>
            <person name="Hayashizaki Y."/>
            <person name="Johnson-Hopson C."/>
            <person name="Hsuan V.W."/>
            <person name="Iida K."/>
            <person name="Karnes M."/>
            <person name="Khan S."/>
            <person name="Koesema E."/>
            <person name="Ishida J."/>
            <person name="Jiang P.X."/>
            <person name="Jones T."/>
            <person name="Kawai J."/>
            <person name="Kamiya A."/>
            <person name="Meyers C."/>
            <person name="Nakajima M."/>
            <person name="Narusaka M."/>
            <person name="Seki M."/>
            <person name="Sakurai T."/>
            <person name="Satou M."/>
            <person name="Tamse R."/>
            <person name="Vaysberg M."/>
            <person name="Wallender E.K."/>
            <person name="Wong C."/>
            <person name="Yamamura Y."/>
            <person name="Yuan S."/>
            <person name="Shinozaki K."/>
            <person name="Davis R.W."/>
            <person name="Theologis A."/>
            <person name="Ecker J.R."/>
        </authorList>
    </citation>
    <scope>NUCLEOTIDE SEQUENCE [LARGE SCALE MRNA]</scope>
    <source>
        <strain>cv. Columbia</strain>
    </source>
</reference>
<reference key="5">
    <citation type="submission" date="2006-07" db="EMBL/GenBank/DDBJ databases">
        <title>Large-scale analysis of RIKEN Arabidopsis full-length (RAFL) cDNAs.</title>
        <authorList>
            <person name="Totoki Y."/>
            <person name="Seki M."/>
            <person name="Ishida J."/>
            <person name="Nakajima M."/>
            <person name="Enju A."/>
            <person name="Kamiya A."/>
            <person name="Narusaka M."/>
            <person name="Shin-i T."/>
            <person name="Nakagawa M."/>
            <person name="Sakamoto N."/>
            <person name="Oishi K."/>
            <person name="Kohara Y."/>
            <person name="Kobayashi M."/>
            <person name="Toyoda A."/>
            <person name="Sakaki Y."/>
            <person name="Sakurai T."/>
            <person name="Iida K."/>
            <person name="Akiyama K."/>
            <person name="Satou M."/>
            <person name="Toyoda T."/>
            <person name="Konagaya A."/>
            <person name="Carninci P."/>
            <person name="Kawai J."/>
            <person name="Hayashizaki Y."/>
            <person name="Shinozaki K."/>
        </authorList>
    </citation>
    <scope>NUCLEOTIDE SEQUENCE [LARGE SCALE MRNA]</scope>
    <source>
        <strain>cv. Columbia</strain>
    </source>
</reference>
<reference key="6">
    <citation type="submission" date="2002-03" db="EMBL/GenBank/DDBJ databases">
        <title>Full-length cDNA from Arabidopsis thaliana.</title>
        <authorList>
            <person name="Brover V.V."/>
            <person name="Troukhan M.E."/>
            <person name="Alexandrov N.A."/>
            <person name="Lu Y.-P."/>
            <person name="Flavell R.B."/>
            <person name="Feldmann K.A."/>
        </authorList>
    </citation>
    <scope>NUCLEOTIDE SEQUENCE [LARGE SCALE MRNA]</scope>
</reference>
<protein>
    <recommendedName>
        <fullName>Reticulon-like protein B22</fullName>
        <shortName>AtRTNLB22</shortName>
    </recommendedName>
</protein>